<comment type="subcellular location">
    <subcellularLocation>
        <location evidence="1">Plastid</location>
        <location evidence="1">Chloroplast thylakoid lumen</location>
    </subcellularLocation>
</comment>
<reference evidence="3" key="1">
    <citation type="journal article" date="2002" name="J. Biol. Chem.">
        <title>Proteome map of the chloroplast lumen of Arabidopsis thaliana.</title>
        <authorList>
            <person name="Schubert M."/>
            <person name="Petersson U.A."/>
            <person name="Haas B.J."/>
            <person name="Funk C."/>
            <person name="Schroeder W.P."/>
            <person name="Kieselbach T."/>
        </authorList>
    </citation>
    <scope>PROTEIN SEQUENCE</scope>
    <scope>SUBCELLULAR LOCATION</scope>
    <source>
        <tissue evidence="1">Leaf</tissue>
    </source>
</reference>
<feature type="chain" id="PRO_0000308525" description="Thylakoid lumenal 25.3 kDa protein">
    <location>
        <begin position="1"/>
        <end position="19" status="greater than"/>
    </location>
</feature>
<feature type="non-terminal residue" evidence="2">
    <location>
        <position position="19"/>
    </location>
</feature>
<protein>
    <recommendedName>
        <fullName>Thylakoid lumenal 25.3 kDa protein</fullName>
    </recommendedName>
    <alternativeName>
        <fullName>P25.3</fullName>
    </alternativeName>
</protein>
<accession>P85305</accession>
<evidence type="ECO:0000269" key="1">
    <source>
    </source>
</evidence>
<evidence type="ECO:0000303" key="2">
    <source>
    </source>
</evidence>
<evidence type="ECO:0000305" key="3"/>
<organism>
    <name type="scientific">Spinacia oleracea</name>
    <name type="common">Spinach</name>
    <dbReference type="NCBI Taxonomy" id="3562"/>
    <lineage>
        <taxon>Eukaryota</taxon>
        <taxon>Viridiplantae</taxon>
        <taxon>Streptophyta</taxon>
        <taxon>Embryophyta</taxon>
        <taxon>Tracheophyta</taxon>
        <taxon>Spermatophyta</taxon>
        <taxon>Magnoliopsida</taxon>
        <taxon>eudicotyledons</taxon>
        <taxon>Gunneridae</taxon>
        <taxon>Pentapetalae</taxon>
        <taxon>Caryophyllales</taxon>
        <taxon>Chenopodiaceae</taxon>
        <taxon>Chenopodioideae</taxon>
        <taxon>Anserineae</taxon>
        <taxon>Spinacia</taxon>
    </lineage>
</organism>
<dbReference type="Proteomes" id="UP001155700">
    <property type="component" value="Unplaced"/>
</dbReference>
<dbReference type="GO" id="GO:0009543">
    <property type="term" value="C:chloroplast thylakoid lumen"/>
    <property type="evidence" value="ECO:0007669"/>
    <property type="project" value="UniProtKB-SubCell"/>
</dbReference>
<proteinExistence type="evidence at protein level"/>
<name>TL25_SPIOL</name>
<keyword id="KW-0150">Chloroplast</keyword>
<keyword id="KW-0903">Direct protein sequencing</keyword>
<keyword id="KW-0934">Plastid</keyword>
<keyword id="KW-1185">Reference proteome</keyword>
<keyword id="KW-0793">Thylakoid</keyword>
<sequence length="19" mass="2093">AIANAPLLDTTITDRVFFD</sequence>